<name>RR2_SOYBN</name>
<proteinExistence type="inferred from homology"/>
<keyword id="KW-0150">Chloroplast</keyword>
<keyword id="KW-0934">Plastid</keyword>
<keyword id="KW-1185">Reference proteome</keyword>
<keyword id="KW-0687">Ribonucleoprotein</keyword>
<keyword id="KW-0689">Ribosomal protein</keyword>
<sequence length="236" mass="26892">MTKRYWNIILEEMMEAGVHFGHGTRKWNPKMSPYISAKRKGIHITNLIRTARFLSEACDLVFDAASEGKQFLIVGTKKKAADSVARAAIRARCHYVNKKWLGGMLTNWYTTETRLQKFRDLRMQQKTGRLNSFPKRDAAILKRHLAHLETYLGGIKYMTGLPDIVIIVDQQEEYTALRECITLEIPTICLIDTNCDPDLADISIPANDDAIASIRLILNKLVFAICEGRSSYIRNS</sequence>
<organism>
    <name type="scientific">Glycine max</name>
    <name type="common">Soybean</name>
    <name type="synonym">Glycine hispida</name>
    <dbReference type="NCBI Taxonomy" id="3847"/>
    <lineage>
        <taxon>Eukaryota</taxon>
        <taxon>Viridiplantae</taxon>
        <taxon>Streptophyta</taxon>
        <taxon>Embryophyta</taxon>
        <taxon>Tracheophyta</taxon>
        <taxon>Spermatophyta</taxon>
        <taxon>Magnoliopsida</taxon>
        <taxon>eudicotyledons</taxon>
        <taxon>Gunneridae</taxon>
        <taxon>Pentapetalae</taxon>
        <taxon>rosids</taxon>
        <taxon>fabids</taxon>
        <taxon>Fabales</taxon>
        <taxon>Fabaceae</taxon>
        <taxon>Papilionoideae</taxon>
        <taxon>50 kb inversion clade</taxon>
        <taxon>NPAAA clade</taxon>
        <taxon>indigoferoid/millettioid clade</taxon>
        <taxon>Phaseoleae</taxon>
        <taxon>Glycine</taxon>
        <taxon>Glycine subgen. Soja</taxon>
    </lineage>
</organism>
<gene>
    <name type="primary">rps2</name>
</gene>
<protein>
    <recommendedName>
        <fullName evidence="1">Small ribosomal subunit protein uS2c</fullName>
    </recommendedName>
    <alternativeName>
        <fullName>30S ribosomal protein S2, chloroplastic</fullName>
    </alternativeName>
</protein>
<geneLocation type="chloroplast"/>
<feature type="chain" id="PRO_0000277457" description="Small ribosomal subunit protein uS2c">
    <location>
        <begin position="1"/>
        <end position="236"/>
    </location>
</feature>
<reference key="1">
    <citation type="journal article" date="2005" name="Plant Mol. Biol.">
        <title>Complete chloroplast genome sequence of Glycine max and comparative analyses with other legume genomes.</title>
        <authorList>
            <person name="Saski C."/>
            <person name="Lee S.-B."/>
            <person name="Daniell H."/>
            <person name="Wood T.C."/>
            <person name="Tomkins J."/>
            <person name="Kim H.-G."/>
            <person name="Jansen R.K."/>
        </authorList>
    </citation>
    <scope>NUCLEOTIDE SEQUENCE [LARGE SCALE GENOMIC DNA]</scope>
    <source>
        <strain>cv. PI 437654</strain>
    </source>
</reference>
<evidence type="ECO:0000305" key="1"/>
<dbReference type="EMBL" id="DQ317523">
    <property type="protein sequence ID" value="ABC25126.1"/>
    <property type="molecule type" value="Genomic_DNA"/>
</dbReference>
<dbReference type="RefSeq" id="YP_538766.1">
    <property type="nucleotide sequence ID" value="NC_007942.1"/>
</dbReference>
<dbReference type="SMR" id="Q2PMT2"/>
<dbReference type="FunCoup" id="Q2PMT2">
    <property type="interactions" value="1104"/>
</dbReference>
<dbReference type="STRING" id="3847.Q2PMT2"/>
<dbReference type="PaxDb" id="3847-GLYMA03G03685.1"/>
<dbReference type="GeneID" id="3989294"/>
<dbReference type="KEGG" id="gmx:3989294"/>
<dbReference type="eggNOG" id="KOG0832">
    <property type="taxonomic scope" value="Eukaryota"/>
</dbReference>
<dbReference type="InParanoid" id="Q2PMT2"/>
<dbReference type="Proteomes" id="UP000008827">
    <property type="component" value="Chloroplast"/>
</dbReference>
<dbReference type="GO" id="GO:0009507">
    <property type="term" value="C:chloroplast"/>
    <property type="evidence" value="ECO:0007669"/>
    <property type="project" value="UniProtKB-SubCell"/>
</dbReference>
<dbReference type="GO" id="GO:0005763">
    <property type="term" value="C:mitochondrial small ribosomal subunit"/>
    <property type="evidence" value="ECO:0000318"/>
    <property type="project" value="GO_Central"/>
</dbReference>
<dbReference type="GO" id="GO:0003735">
    <property type="term" value="F:structural constituent of ribosome"/>
    <property type="evidence" value="ECO:0000318"/>
    <property type="project" value="GO_Central"/>
</dbReference>
<dbReference type="GO" id="GO:0006412">
    <property type="term" value="P:translation"/>
    <property type="evidence" value="ECO:0007669"/>
    <property type="project" value="UniProtKB-UniRule"/>
</dbReference>
<dbReference type="CDD" id="cd01425">
    <property type="entry name" value="RPS2"/>
    <property type="match status" value="1"/>
</dbReference>
<dbReference type="FunFam" id="3.40.50.10490:FF:000101">
    <property type="match status" value="1"/>
</dbReference>
<dbReference type="FunFam" id="1.10.287.610:FF:000001">
    <property type="entry name" value="30S ribosomal protein S2"/>
    <property type="match status" value="1"/>
</dbReference>
<dbReference type="Gene3D" id="3.40.50.10490">
    <property type="entry name" value="Glucose-6-phosphate isomerase like protein, domain 1"/>
    <property type="match status" value="1"/>
</dbReference>
<dbReference type="Gene3D" id="1.10.287.610">
    <property type="entry name" value="Helix hairpin bin"/>
    <property type="match status" value="1"/>
</dbReference>
<dbReference type="HAMAP" id="MF_00291_B">
    <property type="entry name" value="Ribosomal_uS2_B"/>
    <property type="match status" value="1"/>
</dbReference>
<dbReference type="InterPro" id="IPR001865">
    <property type="entry name" value="Ribosomal_uS2"/>
</dbReference>
<dbReference type="InterPro" id="IPR005706">
    <property type="entry name" value="Ribosomal_uS2_bac/mit/plastid"/>
</dbReference>
<dbReference type="InterPro" id="IPR018130">
    <property type="entry name" value="Ribosomal_uS2_CS"/>
</dbReference>
<dbReference type="InterPro" id="IPR023591">
    <property type="entry name" value="Ribosomal_uS2_flav_dom_sf"/>
</dbReference>
<dbReference type="NCBIfam" id="TIGR01011">
    <property type="entry name" value="rpsB_bact"/>
    <property type="match status" value="1"/>
</dbReference>
<dbReference type="PANTHER" id="PTHR12534">
    <property type="entry name" value="30S RIBOSOMAL PROTEIN S2 PROKARYOTIC AND ORGANELLAR"/>
    <property type="match status" value="1"/>
</dbReference>
<dbReference type="PANTHER" id="PTHR12534:SF0">
    <property type="entry name" value="SMALL RIBOSOMAL SUBUNIT PROTEIN US2M"/>
    <property type="match status" value="1"/>
</dbReference>
<dbReference type="Pfam" id="PF00318">
    <property type="entry name" value="Ribosomal_S2"/>
    <property type="match status" value="1"/>
</dbReference>
<dbReference type="PRINTS" id="PR00395">
    <property type="entry name" value="RIBOSOMALS2"/>
</dbReference>
<dbReference type="SUPFAM" id="SSF52313">
    <property type="entry name" value="Ribosomal protein S2"/>
    <property type="match status" value="1"/>
</dbReference>
<dbReference type="PROSITE" id="PS00962">
    <property type="entry name" value="RIBOSOMAL_S2_1"/>
    <property type="match status" value="1"/>
</dbReference>
<comment type="subcellular location">
    <subcellularLocation>
        <location>Plastid</location>
        <location>Chloroplast</location>
    </subcellularLocation>
</comment>
<comment type="similarity">
    <text evidence="1">Belongs to the universal ribosomal protein uS2 family.</text>
</comment>
<accession>Q2PMT2</accession>